<evidence type="ECO:0000255" key="1">
    <source>
        <dbReference type="HAMAP-Rule" id="MF_04066"/>
    </source>
</evidence>
<evidence type="ECO:0000256" key="2">
    <source>
        <dbReference type="SAM" id="MobiDB-lite"/>
    </source>
</evidence>
<protein>
    <recommendedName>
        <fullName evidence="1">Non-structural protein 1</fullName>
        <shortName evidence="1">NS1</shortName>
    </recommendedName>
    <alternativeName>
        <fullName evidence="1">NS1A</fullName>
    </alternativeName>
</protein>
<dbReference type="EMBL" id="M80952">
    <property type="protein sequence ID" value="AAC36135.1"/>
    <property type="molecule type" value="Genomic_RNA"/>
</dbReference>
<dbReference type="SMR" id="Q9YPE7"/>
<dbReference type="GO" id="GO:0030430">
    <property type="term" value="C:host cell cytoplasm"/>
    <property type="evidence" value="ECO:0007669"/>
    <property type="project" value="UniProtKB-SubCell"/>
</dbReference>
<dbReference type="GO" id="GO:0042025">
    <property type="term" value="C:host cell nucleus"/>
    <property type="evidence" value="ECO:0007669"/>
    <property type="project" value="UniProtKB-SubCell"/>
</dbReference>
<dbReference type="GO" id="GO:0030291">
    <property type="term" value="F:protein serine/threonine kinase inhibitor activity"/>
    <property type="evidence" value="ECO:0007669"/>
    <property type="project" value="UniProtKB-KW"/>
</dbReference>
<dbReference type="GO" id="GO:0003723">
    <property type="term" value="F:RNA binding"/>
    <property type="evidence" value="ECO:0007669"/>
    <property type="project" value="UniProtKB-KW"/>
</dbReference>
<dbReference type="GO" id="GO:0039540">
    <property type="term" value="P:symbiont-mediated suppression of host cytoplasmic pattern recognition receptor signaling pathway via inhibition of RIG-I activity"/>
    <property type="evidence" value="ECO:0007669"/>
    <property type="project" value="UniProtKB-KW"/>
</dbReference>
<dbReference type="GO" id="GO:0039657">
    <property type="term" value="P:symbiont-mediated suppression of host gene expression"/>
    <property type="evidence" value="ECO:0007669"/>
    <property type="project" value="UniProtKB-KW"/>
</dbReference>
<dbReference type="GO" id="GO:0039524">
    <property type="term" value="P:symbiont-mediated suppression of host mRNA processing"/>
    <property type="evidence" value="ECO:0007669"/>
    <property type="project" value="UniProtKB-KW"/>
</dbReference>
<dbReference type="GO" id="GO:0039580">
    <property type="term" value="P:symbiont-mediated suppression of host PKR/eIFalpha signaling"/>
    <property type="evidence" value="ECO:0007669"/>
    <property type="project" value="UniProtKB-KW"/>
</dbReference>
<dbReference type="GO" id="GO:0039502">
    <property type="term" value="P:symbiont-mediated suppression of host type I interferon-mediated signaling pathway"/>
    <property type="evidence" value="ECO:0007669"/>
    <property type="project" value="UniProtKB-KW"/>
</dbReference>
<dbReference type="FunFam" id="1.10.287.10:FF:000001">
    <property type="entry name" value="Non-structural protein 1"/>
    <property type="match status" value="1"/>
</dbReference>
<dbReference type="FunFam" id="3.30.420.330:FF:000001">
    <property type="entry name" value="Non-structural protein 1"/>
    <property type="match status" value="1"/>
</dbReference>
<dbReference type="Gene3D" id="3.30.420.330">
    <property type="entry name" value="Influenza virus non-structural protein, effector domain"/>
    <property type="match status" value="1"/>
</dbReference>
<dbReference type="Gene3D" id="1.10.287.10">
    <property type="entry name" value="S15/NS1, RNA-binding"/>
    <property type="match status" value="1"/>
</dbReference>
<dbReference type="HAMAP" id="MF_04066">
    <property type="entry name" value="INFV_NS1"/>
    <property type="match status" value="1"/>
</dbReference>
<dbReference type="InterPro" id="IPR004208">
    <property type="entry name" value="NS1"/>
</dbReference>
<dbReference type="InterPro" id="IPR000256">
    <property type="entry name" value="NS1A"/>
</dbReference>
<dbReference type="InterPro" id="IPR038064">
    <property type="entry name" value="NS1A_effect_dom-like_sf"/>
</dbReference>
<dbReference type="InterPro" id="IPR009068">
    <property type="entry name" value="uS15_NS1_RNA-bd_sf"/>
</dbReference>
<dbReference type="Pfam" id="PF00600">
    <property type="entry name" value="Flu_NS1"/>
    <property type="match status" value="1"/>
</dbReference>
<dbReference type="SUPFAM" id="SSF143021">
    <property type="entry name" value="Ns1 effector domain-like"/>
    <property type="match status" value="1"/>
</dbReference>
<dbReference type="SUPFAM" id="SSF47060">
    <property type="entry name" value="S15/NS1 RNA-binding domain"/>
    <property type="match status" value="1"/>
</dbReference>
<organism>
    <name type="scientific">Influenza A virus (strain A/Whale/Maine/328/1984 H13N2)</name>
    <dbReference type="NCBI Taxonomy" id="385593"/>
    <lineage>
        <taxon>Viruses</taxon>
        <taxon>Riboviria</taxon>
        <taxon>Orthornavirae</taxon>
        <taxon>Negarnaviricota</taxon>
        <taxon>Polyploviricotina</taxon>
        <taxon>Insthoviricetes</taxon>
        <taxon>Articulavirales</taxon>
        <taxon>Orthomyxoviridae</taxon>
        <taxon>Alphainfluenzavirus</taxon>
        <taxon>Alphainfluenzavirus influenzae</taxon>
        <taxon>Influenza A virus</taxon>
    </lineage>
</organism>
<keyword id="KW-0025">Alternative splicing</keyword>
<keyword id="KW-1262">Eukaryotic host gene expression shutoff by virus</keyword>
<keyword id="KW-1035">Host cytoplasm</keyword>
<keyword id="KW-1190">Host gene expression shutoff by virus</keyword>
<keyword id="KW-1192">Host mRNA suppression by virus</keyword>
<keyword id="KW-1048">Host nucleus</keyword>
<keyword id="KW-0945">Host-virus interaction</keyword>
<keyword id="KW-1090">Inhibition of host innate immune response by virus</keyword>
<keyword id="KW-1114">Inhibition of host interferon signaling pathway by virus</keyword>
<keyword id="KW-1102">Inhibition of host PKR by virus</keyword>
<keyword id="KW-1103">Inhibition of host pre-mRNA processing by virus</keyword>
<keyword id="KW-1088">Inhibition of host RIG-I by virus</keyword>
<keyword id="KW-1113">Inhibition of host RLR pathway by virus</keyword>
<keyword id="KW-0922">Interferon antiviral system evasion</keyword>
<keyword id="KW-0694">RNA-binding</keyword>
<keyword id="KW-0832">Ubl conjugation</keyword>
<keyword id="KW-0899">Viral immunoevasion</keyword>
<name>NS1_I84A2</name>
<sequence length="230" mass="26053">MDSNTVSSFQVDCFLWHVRKRIADQELGDAPFLDRLRRDQKSLRGRGSTLGLDIETATRAGKQIVERILEEESDEALKMTIASVPASRYLTDMTLEEMSREWFMLMPKQKVAGSLCIRMDQAIMDKNIILKANFSVIFDRLETLILLRAFTEEGAIVGEISPLPSLPGHTDEDVKNAIGVLIGGLEWNDNTVRVSETLQRFAWRSSNEDGRPSLPPKQKRKMARTIESEV</sequence>
<accession>Q9YPE7</accession>
<feature type="chain" id="PRO_0000281021" description="Non-structural protein 1">
    <location>
        <begin position="1"/>
        <end position="230"/>
    </location>
</feature>
<feature type="region of interest" description="RNA-binding and homodimerization" evidence="1">
    <location>
        <begin position="1"/>
        <end position="73"/>
    </location>
</feature>
<feature type="region of interest" description="CPSF4-binding" evidence="1">
    <location>
        <begin position="180"/>
        <end position="215"/>
    </location>
</feature>
<feature type="region of interest" description="Disordered" evidence="2">
    <location>
        <begin position="205"/>
        <end position="230"/>
    </location>
</feature>
<feature type="region of interest" description="PABPN1-binding" evidence="1">
    <location>
        <begin position="223"/>
        <end position="230"/>
    </location>
</feature>
<feature type="short sequence motif" description="Nuclear localization signal" evidence="1">
    <location>
        <begin position="34"/>
        <end position="38"/>
    </location>
</feature>
<feature type="short sequence motif" description="Nuclear export signal" evidence="1">
    <location>
        <begin position="137"/>
        <end position="146"/>
    </location>
</feature>
<organismHost>
    <name type="scientific">Aves</name>
    <dbReference type="NCBI Taxonomy" id="8782"/>
</organismHost>
<organismHost>
    <name type="scientific">Cetacea</name>
    <name type="common">whales</name>
    <dbReference type="NCBI Taxonomy" id="9721"/>
</organismHost>
<gene>
    <name evidence="1" type="primary">NS</name>
</gene>
<proteinExistence type="inferred from homology"/>
<reference key="1">
    <citation type="journal article" date="1998" name="Virus Res.">
        <title>Influence of host species on the evolution of the nonstructural (NS) gene of influenza A viruses.</title>
        <authorList>
            <person name="Kawaoka Y."/>
            <person name="Gorman O.T."/>
            <person name="Ito T."/>
            <person name="Wells K."/>
            <person name="Donis R.O."/>
            <person name="Castrucci M.R."/>
            <person name="Donatelli I."/>
            <person name="Webster R.G."/>
        </authorList>
    </citation>
    <scope>NUCLEOTIDE SEQUENCE [GENOMIC RNA]</scope>
</reference>
<comment type="function">
    <text evidence="1">Inhibits post-transcriptional processing of cellular pre-mRNA, by binding and inhibiting two cellular proteins that are required for the 3'-end processing of cellular pre-mRNAs: the 30 kDa cleavage and polyadenylation specificity factor/CPSF4 and the poly(A)-binding protein 2/PABPN1. In turn, unprocessed 3' end pre-mRNAs accumulate in the host nucleus and are no longer exported to the cytoplasm. Cellular protein synthesis is thereby shut off very early after virus infection. Viral protein synthesis is not affected by the inhibition of the cellular 3' end processing machinery because the poly(A) tails of viral mRNAs are produced by the viral polymerase through a stuttering mechanism. Prevents the establishment of the cellular antiviral state by inhibiting TRIM25-mediated RIGI ubiquitination, which normally triggers the antiviral transduction signal that leads to the activation of type I IFN genes by transcription factors IRF3 and IRF7. Also binds poly(A) and U6 snRNA. Inhibits the integrated stress response (ISR) in the infected cell by blocking dsRNA binding by EIF2AK2/PKR and further phosphorylation of EIF2S1/EIF-2ALPHA. Stress granule formation is thus inhibited, which allows protein synthesis and viral replication.</text>
</comment>
<comment type="subunit">
    <text evidence="1">Homodimer. Interacts with host TRIM25 (via coiled coil); this interaction specifically inhibits TRIM25 multimerization and TRIM25-mediated RIGI CARD ubiquitination. Interacts with human EIF2AK2/PKR, CPSF4, IVNS1ABP and PABPN1.</text>
</comment>
<comment type="subcellular location">
    <subcellularLocation>
        <location evidence="1">Host nucleus</location>
    </subcellularLocation>
    <subcellularLocation>
        <location evidence="1">Host cytoplasm</location>
    </subcellularLocation>
    <text evidence="1">In uninfected, transfected cells, NS1 is localized in the nucleus. Only in virus infected cells, the nuclear export signal is unveiled, presumably by a viral protein, and a fraction of NS1 is exported in the cytoplasm.</text>
</comment>
<comment type="alternative products">
    <event type="alternative splicing"/>
    <isoform>
        <id>Q9YPE7-1</id>
        <name>NS1</name>
        <sequence type="displayed"/>
    </isoform>
    <isoform>
        <id>P0C2M1-1</id>
        <name>NEP</name>
        <name>NS2</name>
        <sequence type="external"/>
    </isoform>
</comment>
<comment type="domain">
    <text evidence="1">The dsRNA-binding region is required for suppression of RNA silencing.</text>
</comment>
<comment type="PTM">
    <text evidence="1">Upon interferon induction, ISGylated via host HERC5; this results in the impairment of NS1 interaction with RNA targets due to its inability to form homodimers and to interact with host EIF2AK2/PKR.</text>
</comment>
<comment type="similarity">
    <text evidence="1">Belongs to the influenza A viruses NS1 family.</text>
</comment>